<proteinExistence type="evidence at protein level"/>
<gene>
    <name type="primary">Pngl</name>
    <name type="synonym">PNGase</name>
    <name type="ORF">CG7865</name>
</gene>
<dbReference type="EC" id="3.5.1.52"/>
<dbReference type="EMBL" id="AF250926">
    <property type="protein sequence ID" value="AAF74722.1"/>
    <property type="molecule type" value="mRNA"/>
</dbReference>
<dbReference type="EMBL" id="AE013599">
    <property type="protein sequence ID" value="AAF57293.2"/>
    <property type="molecule type" value="Genomic_DNA"/>
</dbReference>
<dbReference type="EMBL" id="AE013599">
    <property type="protein sequence ID" value="AAM68339.3"/>
    <property type="molecule type" value="Genomic_DNA"/>
</dbReference>
<dbReference type="EMBL" id="AY119239">
    <property type="protein sequence ID" value="AAM51099.1"/>
    <property type="status" value="ALT_INIT"/>
    <property type="molecule type" value="mRNA"/>
</dbReference>
<dbReference type="EMBL" id="BT001557">
    <property type="protein sequence ID" value="AAN71312.1"/>
    <property type="molecule type" value="mRNA"/>
</dbReference>
<dbReference type="RefSeq" id="NP_610192.1">
    <property type="nucleotide sequence ID" value="NM_136348.3"/>
</dbReference>
<dbReference type="RefSeq" id="NP_724444.3">
    <property type="nucleotide sequence ID" value="NM_165454.3"/>
</dbReference>
<dbReference type="SMR" id="Q7KRR5"/>
<dbReference type="BioGRID" id="61433">
    <property type="interactions" value="8"/>
</dbReference>
<dbReference type="FunCoup" id="Q7KRR5">
    <property type="interactions" value="2479"/>
</dbReference>
<dbReference type="IntAct" id="Q7KRR5">
    <property type="interactions" value="7"/>
</dbReference>
<dbReference type="STRING" id="7227.FBpp0307273"/>
<dbReference type="iPTMnet" id="Q7KRR5"/>
<dbReference type="PaxDb" id="7227-FBpp0085324"/>
<dbReference type="EnsemblMetazoa" id="FBtr0085972">
    <property type="protein sequence ID" value="FBpp0085325"/>
    <property type="gene ID" value="FBgn0033050"/>
</dbReference>
<dbReference type="EnsemblMetazoa" id="FBtr0335285">
    <property type="protein sequence ID" value="FBpp0307273"/>
    <property type="gene ID" value="FBgn0033050"/>
</dbReference>
<dbReference type="GeneID" id="35527"/>
<dbReference type="KEGG" id="dme:Dmel_CG7865"/>
<dbReference type="UCSC" id="CG7865-RA">
    <property type="organism name" value="d. melanogaster"/>
</dbReference>
<dbReference type="AGR" id="FB:FBgn0033050"/>
<dbReference type="CTD" id="35527"/>
<dbReference type="FlyBase" id="FBgn0033050">
    <property type="gene designation" value="Pngl"/>
</dbReference>
<dbReference type="VEuPathDB" id="VectorBase:FBgn0033050"/>
<dbReference type="eggNOG" id="KOG0909">
    <property type="taxonomic scope" value="Eukaryota"/>
</dbReference>
<dbReference type="GeneTree" id="ENSGT00390000006540"/>
<dbReference type="HOGENOM" id="CLU_030187_1_0_1"/>
<dbReference type="InParanoid" id="Q7KRR5"/>
<dbReference type="OMA" id="DLQDVTW"/>
<dbReference type="OrthoDB" id="409136at2759"/>
<dbReference type="PhylomeDB" id="Q7KRR5"/>
<dbReference type="BRENDA" id="3.5.1.52">
    <property type="organism ID" value="1994"/>
</dbReference>
<dbReference type="Reactome" id="R-DME-532668">
    <property type="pathway name" value="N-glycan trimming in the ER and Calnexin/Calreticulin cycle"/>
</dbReference>
<dbReference type="SignaLink" id="Q7KRR5"/>
<dbReference type="BioGRID-ORCS" id="35527">
    <property type="hits" value="1 hit in 1 CRISPR screen"/>
</dbReference>
<dbReference type="GenomeRNAi" id="35527"/>
<dbReference type="PRO" id="PR:Q7KRR5"/>
<dbReference type="Proteomes" id="UP000000803">
    <property type="component" value="Chromosome 2R"/>
</dbReference>
<dbReference type="Bgee" id="FBgn0033050">
    <property type="expression patterns" value="Expressed in embryonic/larval hemocyte (Drosophila) and 134 other cell types or tissues"/>
</dbReference>
<dbReference type="GO" id="GO:0005737">
    <property type="term" value="C:cytoplasm"/>
    <property type="evidence" value="ECO:0000250"/>
    <property type="project" value="UniProtKB"/>
</dbReference>
<dbReference type="GO" id="GO:0005829">
    <property type="term" value="C:cytosol"/>
    <property type="evidence" value="ECO:0000314"/>
    <property type="project" value="FlyBase"/>
</dbReference>
<dbReference type="GO" id="GO:0005634">
    <property type="term" value="C:nucleus"/>
    <property type="evidence" value="ECO:0000318"/>
    <property type="project" value="GO_Central"/>
</dbReference>
<dbReference type="GO" id="GO:0046872">
    <property type="term" value="F:metal ion binding"/>
    <property type="evidence" value="ECO:0007669"/>
    <property type="project" value="UniProtKB-KW"/>
</dbReference>
<dbReference type="GO" id="GO:0000224">
    <property type="term" value="F:peptide-N4-(N-acetyl-beta-glucosaminyl)asparagine amidase activity"/>
    <property type="evidence" value="ECO:0000315"/>
    <property type="project" value="FlyBase"/>
</dbReference>
<dbReference type="GO" id="GO:0006516">
    <property type="term" value="P:glycoprotein catabolic process"/>
    <property type="evidence" value="ECO:0000250"/>
    <property type="project" value="UniProtKB"/>
</dbReference>
<dbReference type="GO" id="GO:0030513">
    <property type="term" value="P:positive regulation of BMP signaling pathway"/>
    <property type="evidence" value="ECO:0000315"/>
    <property type="project" value="FlyBase"/>
</dbReference>
<dbReference type="GO" id="GO:0007495">
    <property type="term" value="P:visceral mesoderm-endoderm interaction involved in midgut development"/>
    <property type="evidence" value="ECO:0000316"/>
    <property type="project" value="FlyBase"/>
</dbReference>
<dbReference type="CDD" id="cd09212">
    <property type="entry name" value="PUB"/>
    <property type="match status" value="1"/>
</dbReference>
<dbReference type="FunFam" id="1.20.58.2190:FF:000001">
    <property type="entry name" value="peptide-N(4)-(N-acetyl-beta- glucosaminyl)asparagine amidase"/>
    <property type="match status" value="1"/>
</dbReference>
<dbReference type="FunFam" id="2.60.120.1020:FF:000001">
    <property type="entry name" value="Peptide-N(4)-(N-acetyl-beta-glucosaminyl)asparagine amidase"/>
    <property type="match status" value="1"/>
</dbReference>
<dbReference type="Gene3D" id="1.20.58.2190">
    <property type="match status" value="1"/>
</dbReference>
<dbReference type="Gene3D" id="2.20.25.10">
    <property type="match status" value="1"/>
</dbReference>
<dbReference type="Gene3D" id="3.10.620.30">
    <property type="match status" value="1"/>
</dbReference>
<dbReference type="Gene3D" id="2.60.120.1020">
    <property type="entry name" value="Peptide N glycanase, PAW domain"/>
    <property type="match status" value="1"/>
</dbReference>
<dbReference type="InterPro" id="IPR008979">
    <property type="entry name" value="Galactose-bd-like_sf"/>
</dbReference>
<dbReference type="InterPro" id="IPR038765">
    <property type="entry name" value="Papain-like_cys_pep_sf"/>
</dbReference>
<dbReference type="InterPro" id="IPR038680">
    <property type="entry name" value="PAW_sf"/>
</dbReference>
<dbReference type="InterPro" id="IPR006588">
    <property type="entry name" value="Peptide_N_glycanase_PAW_dom"/>
</dbReference>
<dbReference type="InterPro" id="IPR050883">
    <property type="entry name" value="PNGase"/>
</dbReference>
<dbReference type="InterPro" id="IPR036339">
    <property type="entry name" value="PUB-like_dom_sf"/>
</dbReference>
<dbReference type="InterPro" id="IPR018997">
    <property type="entry name" value="PUB_domain"/>
</dbReference>
<dbReference type="InterPro" id="IPR002931">
    <property type="entry name" value="Transglutaminase-like"/>
</dbReference>
<dbReference type="PANTHER" id="PTHR12143">
    <property type="entry name" value="PEPTIDE N-GLYCANASE PNGASE -RELATED"/>
    <property type="match status" value="1"/>
</dbReference>
<dbReference type="PANTHER" id="PTHR12143:SF19">
    <property type="entry name" value="PEPTIDE-N(4)-(N-ACETYL-BETA-GLUCOSAMINYL)ASPARAGINE AMIDASE"/>
    <property type="match status" value="1"/>
</dbReference>
<dbReference type="Pfam" id="PF04721">
    <property type="entry name" value="PAW"/>
    <property type="match status" value="1"/>
</dbReference>
<dbReference type="Pfam" id="PF09409">
    <property type="entry name" value="PUB"/>
    <property type="match status" value="1"/>
</dbReference>
<dbReference type="Pfam" id="PF01841">
    <property type="entry name" value="Transglut_core"/>
    <property type="match status" value="1"/>
</dbReference>
<dbReference type="SMART" id="SM00613">
    <property type="entry name" value="PAW"/>
    <property type="match status" value="1"/>
</dbReference>
<dbReference type="SMART" id="SM00580">
    <property type="entry name" value="PUG"/>
    <property type="match status" value="1"/>
</dbReference>
<dbReference type="SMART" id="SM00460">
    <property type="entry name" value="TGc"/>
    <property type="match status" value="1"/>
</dbReference>
<dbReference type="SUPFAM" id="SSF54001">
    <property type="entry name" value="Cysteine proteinases"/>
    <property type="match status" value="1"/>
</dbReference>
<dbReference type="SUPFAM" id="SSF49785">
    <property type="entry name" value="Galactose-binding domain-like"/>
    <property type="match status" value="1"/>
</dbReference>
<dbReference type="SUPFAM" id="SSF143503">
    <property type="entry name" value="PUG domain-like"/>
    <property type="match status" value="1"/>
</dbReference>
<dbReference type="PROSITE" id="PS51398">
    <property type="entry name" value="PAW"/>
    <property type="match status" value="1"/>
</dbReference>
<keyword id="KW-0963">Cytoplasm</keyword>
<keyword id="KW-0378">Hydrolase</keyword>
<keyword id="KW-0479">Metal-binding</keyword>
<keyword id="KW-0597">Phosphoprotein</keyword>
<keyword id="KW-1185">Reference proteome</keyword>
<keyword id="KW-0862">Zinc</keyword>
<protein>
    <recommendedName>
        <fullName>Peptide-N(4)-(N-acetyl-beta-glucosaminyl)asparagine amidase</fullName>
        <ecNumber>3.5.1.52</ecNumber>
    </recommendedName>
    <alternativeName>
        <fullName>Peptide:N-glycanase</fullName>
    </alternativeName>
</protein>
<accession>Q7KRR5</accession>
<accession>Q8IGW3</accession>
<accession>Q8MRV8</accession>
<accession>Q9NBD5</accession>
<accession>Q9V9J5</accession>
<reference key="1">
    <citation type="journal article" date="2000" name="J. Cell Biol.">
        <title>PNG1, a yeast gene encoding a highly conserved peptide:N-glycanase.</title>
        <authorList>
            <person name="Suzuki T."/>
            <person name="Park H."/>
            <person name="Hollingsworth N.M."/>
            <person name="Sternglanz R."/>
            <person name="Lennarz W.J."/>
        </authorList>
    </citation>
    <scope>NUCLEOTIDE SEQUENCE [MRNA]</scope>
</reference>
<reference key="2">
    <citation type="journal article" date="2000" name="Science">
        <title>The genome sequence of Drosophila melanogaster.</title>
        <authorList>
            <person name="Adams M.D."/>
            <person name="Celniker S.E."/>
            <person name="Holt R.A."/>
            <person name="Evans C.A."/>
            <person name="Gocayne J.D."/>
            <person name="Amanatides P.G."/>
            <person name="Scherer S.E."/>
            <person name="Li P.W."/>
            <person name="Hoskins R.A."/>
            <person name="Galle R.F."/>
            <person name="George R.A."/>
            <person name="Lewis S.E."/>
            <person name="Richards S."/>
            <person name="Ashburner M."/>
            <person name="Henderson S.N."/>
            <person name="Sutton G.G."/>
            <person name="Wortman J.R."/>
            <person name="Yandell M.D."/>
            <person name="Zhang Q."/>
            <person name="Chen L.X."/>
            <person name="Brandon R.C."/>
            <person name="Rogers Y.-H.C."/>
            <person name="Blazej R.G."/>
            <person name="Champe M."/>
            <person name="Pfeiffer B.D."/>
            <person name="Wan K.H."/>
            <person name="Doyle C."/>
            <person name="Baxter E.G."/>
            <person name="Helt G."/>
            <person name="Nelson C.R."/>
            <person name="Miklos G.L.G."/>
            <person name="Abril J.F."/>
            <person name="Agbayani A."/>
            <person name="An H.-J."/>
            <person name="Andrews-Pfannkoch C."/>
            <person name="Baldwin D."/>
            <person name="Ballew R.M."/>
            <person name="Basu A."/>
            <person name="Baxendale J."/>
            <person name="Bayraktaroglu L."/>
            <person name="Beasley E.M."/>
            <person name="Beeson K.Y."/>
            <person name="Benos P.V."/>
            <person name="Berman B.P."/>
            <person name="Bhandari D."/>
            <person name="Bolshakov S."/>
            <person name="Borkova D."/>
            <person name="Botchan M.R."/>
            <person name="Bouck J."/>
            <person name="Brokstein P."/>
            <person name="Brottier P."/>
            <person name="Burtis K.C."/>
            <person name="Busam D.A."/>
            <person name="Butler H."/>
            <person name="Cadieu E."/>
            <person name="Center A."/>
            <person name="Chandra I."/>
            <person name="Cherry J.M."/>
            <person name="Cawley S."/>
            <person name="Dahlke C."/>
            <person name="Davenport L.B."/>
            <person name="Davies P."/>
            <person name="de Pablos B."/>
            <person name="Delcher A."/>
            <person name="Deng Z."/>
            <person name="Mays A.D."/>
            <person name="Dew I."/>
            <person name="Dietz S.M."/>
            <person name="Dodson K."/>
            <person name="Doup L.E."/>
            <person name="Downes M."/>
            <person name="Dugan-Rocha S."/>
            <person name="Dunkov B.C."/>
            <person name="Dunn P."/>
            <person name="Durbin K.J."/>
            <person name="Evangelista C.C."/>
            <person name="Ferraz C."/>
            <person name="Ferriera S."/>
            <person name="Fleischmann W."/>
            <person name="Fosler C."/>
            <person name="Gabrielian A.E."/>
            <person name="Garg N.S."/>
            <person name="Gelbart W.M."/>
            <person name="Glasser K."/>
            <person name="Glodek A."/>
            <person name="Gong F."/>
            <person name="Gorrell J.H."/>
            <person name="Gu Z."/>
            <person name="Guan P."/>
            <person name="Harris M."/>
            <person name="Harris N.L."/>
            <person name="Harvey D.A."/>
            <person name="Heiman T.J."/>
            <person name="Hernandez J.R."/>
            <person name="Houck J."/>
            <person name="Hostin D."/>
            <person name="Houston K.A."/>
            <person name="Howland T.J."/>
            <person name="Wei M.-H."/>
            <person name="Ibegwam C."/>
            <person name="Jalali M."/>
            <person name="Kalush F."/>
            <person name="Karpen G.H."/>
            <person name="Ke Z."/>
            <person name="Kennison J.A."/>
            <person name="Ketchum K.A."/>
            <person name="Kimmel B.E."/>
            <person name="Kodira C.D."/>
            <person name="Kraft C.L."/>
            <person name="Kravitz S."/>
            <person name="Kulp D."/>
            <person name="Lai Z."/>
            <person name="Lasko P."/>
            <person name="Lei Y."/>
            <person name="Levitsky A.A."/>
            <person name="Li J.H."/>
            <person name="Li Z."/>
            <person name="Liang Y."/>
            <person name="Lin X."/>
            <person name="Liu X."/>
            <person name="Mattei B."/>
            <person name="McIntosh T.C."/>
            <person name="McLeod M.P."/>
            <person name="McPherson D."/>
            <person name="Merkulov G."/>
            <person name="Milshina N.V."/>
            <person name="Mobarry C."/>
            <person name="Morris J."/>
            <person name="Moshrefi A."/>
            <person name="Mount S.M."/>
            <person name="Moy M."/>
            <person name="Murphy B."/>
            <person name="Murphy L."/>
            <person name="Muzny D.M."/>
            <person name="Nelson D.L."/>
            <person name="Nelson D.R."/>
            <person name="Nelson K.A."/>
            <person name="Nixon K."/>
            <person name="Nusskern D.R."/>
            <person name="Pacleb J.M."/>
            <person name="Palazzolo M."/>
            <person name="Pittman G.S."/>
            <person name="Pan S."/>
            <person name="Pollard J."/>
            <person name="Puri V."/>
            <person name="Reese M.G."/>
            <person name="Reinert K."/>
            <person name="Remington K."/>
            <person name="Saunders R.D.C."/>
            <person name="Scheeler F."/>
            <person name="Shen H."/>
            <person name="Shue B.C."/>
            <person name="Siden-Kiamos I."/>
            <person name="Simpson M."/>
            <person name="Skupski M.P."/>
            <person name="Smith T.J."/>
            <person name="Spier E."/>
            <person name="Spradling A.C."/>
            <person name="Stapleton M."/>
            <person name="Strong R."/>
            <person name="Sun E."/>
            <person name="Svirskas R."/>
            <person name="Tector C."/>
            <person name="Turner R."/>
            <person name="Venter E."/>
            <person name="Wang A.H."/>
            <person name="Wang X."/>
            <person name="Wang Z.-Y."/>
            <person name="Wassarman D.A."/>
            <person name="Weinstock G.M."/>
            <person name="Weissenbach J."/>
            <person name="Williams S.M."/>
            <person name="Woodage T."/>
            <person name="Worley K.C."/>
            <person name="Wu D."/>
            <person name="Yang S."/>
            <person name="Yao Q.A."/>
            <person name="Ye J."/>
            <person name="Yeh R.-F."/>
            <person name="Zaveri J.S."/>
            <person name="Zhan M."/>
            <person name="Zhang G."/>
            <person name="Zhao Q."/>
            <person name="Zheng L."/>
            <person name="Zheng X.H."/>
            <person name="Zhong F.N."/>
            <person name="Zhong W."/>
            <person name="Zhou X."/>
            <person name="Zhu S.C."/>
            <person name="Zhu X."/>
            <person name="Smith H.O."/>
            <person name="Gibbs R.A."/>
            <person name="Myers E.W."/>
            <person name="Rubin G.M."/>
            <person name="Venter J.C."/>
        </authorList>
    </citation>
    <scope>NUCLEOTIDE SEQUENCE [LARGE SCALE GENOMIC DNA]</scope>
    <source>
        <strain>Berkeley</strain>
    </source>
</reference>
<reference key="3">
    <citation type="journal article" date="2002" name="Genome Biol.">
        <title>Annotation of the Drosophila melanogaster euchromatic genome: a systematic review.</title>
        <authorList>
            <person name="Misra S."/>
            <person name="Crosby M.A."/>
            <person name="Mungall C.J."/>
            <person name="Matthews B.B."/>
            <person name="Campbell K.S."/>
            <person name="Hradecky P."/>
            <person name="Huang Y."/>
            <person name="Kaminker J.S."/>
            <person name="Millburn G.H."/>
            <person name="Prochnik S.E."/>
            <person name="Smith C.D."/>
            <person name="Tupy J.L."/>
            <person name="Whitfield E.J."/>
            <person name="Bayraktaroglu L."/>
            <person name="Berman B.P."/>
            <person name="Bettencourt B.R."/>
            <person name="Celniker S.E."/>
            <person name="de Grey A.D.N.J."/>
            <person name="Drysdale R.A."/>
            <person name="Harris N.L."/>
            <person name="Richter J."/>
            <person name="Russo S."/>
            <person name="Schroeder A.J."/>
            <person name="Shu S.Q."/>
            <person name="Stapleton M."/>
            <person name="Yamada C."/>
            <person name="Ashburner M."/>
            <person name="Gelbart W.M."/>
            <person name="Rubin G.M."/>
            <person name="Lewis S.E."/>
        </authorList>
    </citation>
    <scope>GENOME REANNOTATION</scope>
    <source>
        <strain>Berkeley</strain>
    </source>
</reference>
<reference key="4">
    <citation type="journal article" date="2002" name="Genome Biol.">
        <title>A Drosophila full-length cDNA resource.</title>
        <authorList>
            <person name="Stapleton M."/>
            <person name="Carlson J.W."/>
            <person name="Brokstein P."/>
            <person name="Yu C."/>
            <person name="Champe M."/>
            <person name="George R.A."/>
            <person name="Guarin H."/>
            <person name="Kronmiller B."/>
            <person name="Pacleb J.M."/>
            <person name="Park S."/>
            <person name="Wan K.H."/>
            <person name="Rubin G.M."/>
            <person name="Celniker S.E."/>
        </authorList>
    </citation>
    <scope>NUCLEOTIDE SEQUENCE [LARGE SCALE MRNA]</scope>
    <source>
        <strain>Berkeley</strain>
        <tissue>Embryo</tissue>
    </source>
</reference>
<reference key="5">
    <citation type="journal article" date="2008" name="J. Proteome Res.">
        <title>Phosphoproteome analysis of Drosophila melanogaster embryos.</title>
        <authorList>
            <person name="Zhai B."/>
            <person name="Villen J."/>
            <person name="Beausoleil S.A."/>
            <person name="Mintseris J."/>
            <person name="Gygi S.P."/>
        </authorList>
    </citation>
    <scope>PHOSPHORYLATION [LARGE SCALE ANALYSIS] AT SER-126</scope>
    <scope>IDENTIFICATION BY MASS SPECTROMETRY</scope>
    <source>
        <tissue>Embryo</tissue>
    </source>
</reference>
<organism>
    <name type="scientific">Drosophila melanogaster</name>
    <name type="common">Fruit fly</name>
    <dbReference type="NCBI Taxonomy" id="7227"/>
    <lineage>
        <taxon>Eukaryota</taxon>
        <taxon>Metazoa</taxon>
        <taxon>Ecdysozoa</taxon>
        <taxon>Arthropoda</taxon>
        <taxon>Hexapoda</taxon>
        <taxon>Insecta</taxon>
        <taxon>Pterygota</taxon>
        <taxon>Neoptera</taxon>
        <taxon>Endopterygota</taxon>
        <taxon>Diptera</taxon>
        <taxon>Brachycera</taxon>
        <taxon>Muscomorpha</taxon>
        <taxon>Ephydroidea</taxon>
        <taxon>Drosophilidae</taxon>
        <taxon>Drosophila</taxon>
        <taxon>Sophophora</taxon>
    </lineage>
</organism>
<name>NGLY1_DROME</name>
<evidence type="ECO:0000250" key="1"/>
<evidence type="ECO:0000255" key="2">
    <source>
        <dbReference type="PROSITE-ProRule" id="PRU00731"/>
    </source>
</evidence>
<evidence type="ECO:0000269" key="3">
    <source>
    </source>
</evidence>
<evidence type="ECO:0000305" key="4"/>
<feature type="chain" id="PRO_0000248979" description="Peptide-N(4)-(N-acetyl-beta-glucosaminyl)asparagine amidase">
    <location>
        <begin position="1"/>
        <end position="631"/>
    </location>
</feature>
<feature type="domain" description="PUB">
    <location>
        <begin position="34"/>
        <end position="97"/>
    </location>
</feature>
<feature type="domain" description="PAW" evidence="2">
    <location>
        <begin position="441"/>
        <end position="631"/>
    </location>
</feature>
<feature type="active site" description="Nucleophile" evidence="1">
    <location>
        <position position="296"/>
    </location>
</feature>
<feature type="active site" evidence="1">
    <location>
        <position position="323"/>
    </location>
</feature>
<feature type="active site" evidence="1">
    <location>
        <position position="340"/>
    </location>
</feature>
<feature type="binding site" evidence="1">
    <location>
        <position position="246"/>
    </location>
    <ligand>
        <name>Zn(2+)</name>
        <dbReference type="ChEBI" id="CHEBI:29105"/>
    </ligand>
</feature>
<feature type="binding site" evidence="1">
    <location>
        <position position="249"/>
    </location>
    <ligand>
        <name>Zn(2+)</name>
        <dbReference type="ChEBI" id="CHEBI:29105"/>
    </ligand>
</feature>
<feature type="binding site" evidence="1">
    <location>
        <position position="272"/>
    </location>
    <ligand>
        <name>Zn(2+)</name>
        <dbReference type="ChEBI" id="CHEBI:29105"/>
    </ligand>
</feature>
<feature type="binding site" evidence="1">
    <location>
        <position position="273"/>
    </location>
    <ligand>
        <name>Zn(2+)</name>
        <dbReference type="ChEBI" id="CHEBI:29105"/>
    </ligand>
</feature>
<feature type="modified residue" description="Phosphoserine" evidence="3">
    <location>
        <position position="126"/>
    </location>
</feature>
<feature type="sequence conflict" description="In Ref. 4; AAN71312." evidence="4" ref="4">
    <original>F</original>
    <variation>L</variation>
    <location>
        <position position="237"/>
    </location>
</feature>
<comment type="function">
    <text evidence="1">Specifically deglycosylates the denatured form of N-linked glycoproteins in the cytoplasm and assists their proteasome-mediated degradation. Cleaves the beta-aspartyl-glucosamine (GlcNAc) of the glycan and the amide side chain of Asn, converting Asn to Asp. Prefers proteins containing high-mannose over those bearing complex type oligosaccharides. Can recognize misfolded proteins in the endoplasmic reticulum that are exported to the cytosol to be destroyed and deglycosylate them, while it has no activity toward native proteins. Deglycosylation is a prerequisite for subsequent proteasome-mediated degradation of some, but not all, misfolded glycoproteins (By similarity).</text>
</comment>
<comment type="catalytic activity">
    <reaction>
        <text>Hydrolysis of an N(4)-(acetyl-beta-D-glucosaminyl)asparagine residue in which the glucosamine residue may be further glycosylated, to yield a (substituted) N-acetyl-beta-D-glucosaminylamine and a peptide containing an aspartate residue.</text>
        <dbReference type="EC" id="3.5.1.52"/>
    </reaction>
</comment>
<comment type="cofactor">
    <cofactor evidence="1">
        <name>Zn(2+)</name>
        <dbReference type="ChEBI" id="CHEBI:29105"/>
    </cofactor>
    <text evidence="1">Binds 1 zinc ion per subunit.</text>
</comment>
<comment type="subcellular location">
    <subcellularLocation>
        <location evidence="1">Cytoplasm</location>
    </subcellularLocation>
</comment>
<comment type="similarity">
    <text evidence="2">Belongs to the transglutaminase-like superfamily. PNGase family.</text>
</comment>
<comment type="sequence caution" evidence="4">
    <conflict type="erroneous initiation">
        <sequence resource="EMBL-CDS" id="AAM51099"/>
    </conflict>
    <text>Extended N-terminus.</text>
</comment>
<sequence>MVDINLECVHQIEPKTRSAGQQQQERGLKEAYLEAVRILLVLLENILAQPENSMFRTIRQENKAIKEKLLSLPGCERLLEAIGFVRAPSSNAYTLPTEVSLQQVKKYRDALSERRTAWLNGTVSKSPPQQSTTSTTPLFIKPSVEYRHRIAFPRVLRTNNNFLQSLELYSDAVMQYEDNLLLATGRTLIPVEELTEMASEKLIDIQDQIASGERQEKEPCVRDLLLVELVNWFNTQFFQWVNNIPCRVCGSEESRLRRTEREGDIRVEVTVCCGQESKFYRYNDISQLLVSRKGRCGEYANCFTFLCRALDYDARIVHSHFDHVWTEVYSEAQMRWLHVDPSENVIDSPLMYQHGWKRHIDYILAYSRDDIQDVTWRYTNDHQKILHLRKLCGEKEMVQTLDAIRAKRRQNCTADRKLFLSQRNMYEVIGLTLERKPTENELKGRSSGSLSWRQSRGEHTFTNIFVFNLSATELQKRQLNVRYSCATDTYERYAKEGEHITILDSYKTWQKAQFSSKNIFRKVERDWKMAYLARLEDTDCGEIAWTFDFSKTNLKVKSYNLVFETKTFGDGKISVTVDATDGSASVENATGFKIVAKLTGGKGDVAWQHTQLFRQSLNSRDYPFDLQVQLH</sequence>